<reference key="1">
    <citation type="journal article" date="2005" name="DNA Res.">
        <title>Complete genome sequence of the facultative anaerobic magnetotactic bacterium Magnetospirillum sp. strain AMB-1.</title>
        <authorList>
            <person name="Matsunaga T."/>
            <person name="Okamura Y."/>
            <person name="Fukuda Y."/>
            <person name="Wahyudi A.T."/>
            <person name="Murase Y."/>
            <person name="Takeyama H."/>
        </authorList>
    </citation>
    <scope>NUCLEOTIDE SEQUENCE [LARGE SCALE GENOMIC DNA]</scope>
    <source>
        <strain>ATCC 700264 / AMB-1</strain>
    </source>
</reference>
<organism>
    <name type="scientific">Paramagnetospirillum magneticum (strain ATCC 700264 / AMB-1)</name>
    <name type="common">Magnetospirillum magneticum</name>
    <dbReference type="NCBI Taxonomy" id="342108"/>
    <lineage>
        <taxon>Bacteria</taxon>
        <taxon>Pseudomonadati</taxon>
        <taxon>Pseudomonadota</taxon>
        <taxon>Alphaproteobacteria</taxon>
        <taxon>Rhodospirillales</taxon>
        <taxon>Magnetospirillaceae</taxon>
        <taxon>Paramagnetospirillum</taxon>
    </lineage>
</organism>
<keyword id="KW-0068">Autocatalytic cleavage</keyword>
<keyword id="KW-0227">DNA damage</keyword>
<keyword id="KW-0234">DNA repair</keyword>
<keyword id="KW-0235">DNA replication</keyword>
<keyword id="KW-0238">DNA-binding</keyword>
<keyword id="KW-0378">Hydrolase</keyword>
<keyword id="KW-0678">Repressor</keyword>
<keyword id="KW-0742">SOS response</keyword>
<keyword id="KW-0804">Transcription</keyword>
<keyword id="KW-0805">Transcription regulation</keyword>
<comment type="function">
    <text evidence="1">Represses a number of genes involved in the response to DNA damage (SOS response), including recA and lexA. In the presence of single-stranded DNA, RecA interacts with LexA causing an autocatalytic cleavage which disrupts the DNA-binding part of LexA, leading to derepression of the SOS regulon and eventually DNA repair.</text>
</comment>
<comment type="catalytic activity">
    <reaction evidence="1">
        <text>Hydrolysis of Ala-|-Gly bond in repressor LexA.</text>
        <dbReference type="EC" id="3.4.21.88"/>
    </reaction>
</comment>
<comment type="subunit">
    <text evidence="1">Homodimer.</text>
</comment>
<comment type="similarity">
    <text evidence="1">Belongs to the peptidase S24 family.</text>
</comment>
<feature type="chain" id="PRO_1000001301" description="LexA repressor">
    <location>
        <begin position="1"/>
        <end position="235"/>
    </location>
</feature>
<feature type="DNA-binding region" description="H-T-H motif" evidence="1">
    <location>
        <begin position="26"/>
        <end position="46"/>
    </location>
</feature>
<feature type="active site" description="For autocatalytic cleavage activity" evidence="1">
    <location>
        <position position="156"/>
    </location>
</feature>
<feature type="active site" description="For autocatalytic cleavage activity" evidence="1">
    <location>
        <position position="194"/>
    </location>
</feature>
<feature type="site" description="Cleavage; by autolysis" evidence="1">
    <location>
        <begin position="121"/>
        <end position="122"/>
    </location>
</feature>
<evidence type="ECO:0000255" key="1">
    <source>
        <dbReference type="HAMAP-Rule" id="MF_00015"/>
    </source>
</evidence>
<sequence length="235" mass="25467">MLTRKQYELLMFIDERLRATGISPSFDEMKDALDLKSKSGIHRLITGLEERGFIRRLAHRARALEVVRLPENRNDQTLPPPAKAFAPNVIKGGFAASQLAGAPVAGPSDSVTLPLYGKIAAGTPIEALRDHSNSVDIPASMLGSGNHYALTVDGDSMIEAGINDGDTVVIRSCDSAETGTIVVALVDDTEVTLKRLRRKGTSVALEPANKAYETRVLPPDRVKVQGRLVGLLRRY</sequence>
<dbReference type="EC" id="3.4.21.88" evidence="1"/>
<dbReference type="EMBL" id="AP007255">
    <property type="protein sequence ID" value="BAE51670.1"/>
    <property type="molecule type" value="Genomic_DNA"/>
</dbReference>
<dbReference type="RefSeq" id="WP_011385243.1">
    <property type="nucleotide sequence ID" value="NC_007626.1"/>
</dbReference>
<dbReference type="SMR" id="Q2W3A5"/>
<dbReference type="STRING" id="342108.amb2866"/>
<dbReference type="MEROPS" id="S24.001"/>
<dbReference type="KEGG" id="mag:amb2866"/>
<dbReference type="HOGENOM" id="CLU_066192_45_2_5"/>
<dbReference type="OrthoDB" id="9802364at2"/>
<dbReference type="Proteomes" id="UP000007058">
    <property type="component" value="Chromosome"/>
</dbReference>
<dbReference type="GO" id="GO:0003677">
    <property type="term" value="F:DNA binding"/>
    <property type="evidence" value="ECO:0007669"/>
    <property type="project" value="UniProtKB-UniRule"/>
</dbReference>
<dbReference type="GO" id="GO:0004252">
    <property type="term" value="F:serine-type endopeptidase activity"/>
    <property type="evidence" value="ECO:0007669"/>
    <property type="project" value="UniProtKB-UniRule"/>
</dbReference>
<dbReference type="GO" id="GO:0006281">
    <property type="term" value="P:DNA repair"/>
    <property type="evidence" value="ECO:0007669"/>
    <property type="project" value="UniProtKB-UniRule"/>
</dbReference>
<dbReference type="GO" id="GO:0006260">
    <property type="term" value="P:DNA replication"/>
    <property type="evidence" value="ECO:0007669"/>
    <property type="project" value="UniProtKB-UniRule"/>
</dbReference>
<dbReference type="GO" id="GO:0045892">
    <property type="term" value="P:negative regulation of DNA-templated transcription"/>
    <property type="evidence" value="ECO:0007669"/>
    <property type="project" value="UniProtKB-UniRule"/>
</dbReference>
<dbReference type="GO" id="GO:0006508">
    <property type="term" value="P:proteolysis"/>
    <property type="evidence" value="ECO:0007669"/>
    <property type="project" value="InterPro"/>
</dbReference>
<dbReference type="GO" id="GO:0009432">
    <property type="term" value="P:SOS response"/>
    <property type="evidence" value="ECO:0007669"/>
    <property type="project" value="UniProtKB-UniRule"/>
</dbReference>
<dbReference type="CDD" id="cd06529">
    <property type="entry name" value="S24_LexA-like"/>
    <property type="match status" value="1"/>
</dbReference>
<dbReference type="FunFam" id="2.10.109.10:FF:000001">
    <property type="entry name" value="LexA repressor"/>
    <property type="match status" value="1"/>
</dbReference>
<dbReference type="Gene3D" id="2.10.109.10">
    <property type="entry name" value="Umud Fragment, subunit A"/>
    <property type="match status" value="1"/>
</dbReference>
<dbReference type="Gene3D" id="1.10.10.10">
    <property type="entry name" value="Winged helix-like DNA-binding domain superfamily/Winged helix DNA-binding domain"/>
    <property type="match status" value="1"/>
</dbReference>
<dbReference type="HAMAP" id="MF_00015">
    <property type="entry name" value="LexA"/>
    <property type="match status" value="1"/>
</dbReference>
<dbReference type="InterPro" id="IPR006200">
    <property type="entry name" value="LexA"/>
</dbReference>
<dbReference type="InterPro" id="IPR039418">
    <property type="entry name" value="LexA-like"/>
</dbReference>
<dbReference type="InterPro" id="IPR036286">
    <property type="entry name" value="LexA/Signal_pep-like_sf"/>
</dbReference>
<dbReference type="InterPro" id="IPR006199">
    <property type="entry name" value="LexA_DNA-bd_dom"/>
</dbReference>
<dbReference type="InterPro" id="IPR050077">
    <property type="entry name" value="LexA_repressor"/>
</dbReference>
<dbReference type="InterPro" id="IPR006197">
    <property type="entry name" value="Peptidase_S24_LexA"/>
</dbReference>
<dbReference type="InterPro" id="IPR015927">
    <property type="entry name" value="Peptidase_S24_S26A/B/C"/>
</dbReference>
<dbReference type="InterPro" id="IPR036388">
    <property type="entry name" value="WH-like_DNA-bd_sf"/>
</dbReference>
<dbReference type="InterPro" id="IPR036390">
    <property type="entry name" value="WH_DNA-bd_sf"/>
</dbReference>
<dbReference type="NCBIfam" id="TIGR00498">
    <property type="entry name" value="lexA"/>
    <property type="match status" value="1"/>
</dbReference>
<dbReference type="PANTHER" id="PTHR33516">
    <property type="entry name" value="LEXA REPRESSOR"/>
    <property type="match status" value="1"/>
</dbReference>
<dbReference type="PANTHER" id="PTHR33516:SF2">
    <property type="entry name" value="LEXA REPRESSOR-RELATED"/>
    <property type="match status" value="1"/>
</dbReference>
<dbReference type="Pfam" id="PF01726">
    <property type="entry name" value="LexA_DNA_bind"/>
    <property type="match status" value="1"/>
</dbReference>
<dbReference type="Pfam" id="PF00717">
    <property type="entry name" value="Peptidase_S24"/>
    <property type="match status" value="1"/>
</dbReference>
<dbReference type="PRINTS" id="PR00726">
    <property type="entry name" value="LEXASERPTASE"/>
</dbReference>
<dbReference type="SUPFAM" id="SSF51306">
    <property type="entry name" value="LexA/Signal peptidase"/>
    <property type="match status" value="1"/>
</dbReference>
<dbReference type="SUPFAM" id="SSF46785">
    <property type="entry name" value="Winged helix' DNA-binding domain"/>
    <property type="match status" value="1"/>
</dbReference>
<accession>Q2W3A5</accession>
<proteinExistence type="inferred from homology"/>
<name>LEXA_PARM1</name>
<gene>
    <name evidence="1" type="primary">lexA</name>
    <name type="ordered locus">amb2866</name>
</gene>
<protein>
    <recommendedName>
        <fullName evidence="1">LexA repressor</fullName>
        <ecNumber evidence="1">3.4.21.88</ecNumber>
    </recommendedName>
</protein>